<reference key="1">
    <citation type="journal article" date="1990" name="Mol. Cell. Biol.">
        <title>Molecular analysis of nuc-1+, a gene controlling phosphorus acquisition in Neurospora crassa.</title>
        <authorList>
            <person name="Kang S."/>
            <person name="Metzenberg R.L."/>
        </authorList>
    </citation>
    <scope>NUCLEOTIDE SEQUENCE [GENOMIC DNA]</scope>
    <source>
        <strain>ATCC 18889 / 74-OR8-1a / 40-21 / DSM 1258 / FGSC 988</strain>
    </source>
</reference>
<reference key="2">
    <citation type="journal article" date="2003" name="Nature">
        <title>The genome sequence of the filamentous fungus Neurospora crassa.</title>
        <authorList>
            <person name="Galagan J.E."/>
            <person name="Calvo S.E."/>
            <person name="Borkovich K.A."/>
            <person name="Selker E.U."/>
            <person name="Read N.D."/>
            <person name="Jaffe D.B."/>
            <person name="FitzHugh W."/>
            <person name="Ma L.-J."/>
            <person name="Smirnov S."/>
            <person name="Purcell S."/>
            <person name="Rehman B."/>
            <person name="Elkins T."/>
            <person name="Engels R."/>
            <person name="Wang S."/>
            <person name="Nielsen C.B."/>
            <person name="Butler J."/>
            <person name="Endrizzi M."/>
            <person name="Qui D."/>
            <person name="Ianakiev P."/>
            <person name="Bell-Pedersen D."/>
            <person name="Nelson M.A."/>
            <person name="Werner-Washburne M."/>
            <person name="Selitrennikoff C.P."/>
            <person name="Kinsey J.A."/>
            <person name="Braun E.L."/>
            <person name="Zelter A."/>
            <person name="Schulte U."/>
            <person name="Kothe G.O."/>
            <person name="Jedd G."/>
            <person name="Mewes H.-W."/>
            <person name="Staben C."/>
            <person name="Marcotte E."/>
            <person name="Greenberg D."/>
            <person name="Roy A."/>
            <person name="Foley K."/>
            <person name="Naylor J."/>
            <person name="Stange-Thomann N."/>
            <person name="Barrett R."/>
            <person name="Gnerre S."/>
            <person name="Kamal M."/>
            <person name="Kamvysselis M."/>
            <person name="Mauceli E.W."/>
            <person name="Bielke C."/>
            <person name="Rudd S."/>
            <person name="Frishman D."/>
            <person name="Krystofova S."/>
            <person name="Rasmussen C."/>
            <person name="Metzenberg R.L."/>
            <person name="Perkins D.D."/>
            <person name="Kroken S."/>
            <person name="Cogoni C."/>
            <person name="Macino G."/>
            <person name="Catcheside D.E.A."/>
            <person name="Li W."/>
            <person name="Pratt R.J."/>
            <person name="Osmani S.A."/>
            <person name="DeSouza C.P.C."/>
            <person name="Glass N.L."/>
            <person name="Orbach M.J."/>
            <person name="Berglund J.A."/>
            <person name="Voelker R."/>
            <person name="Yarden O."/>
            <person name="Plamann M."/>
            <person name="Seiler S."/>
            <person name="Dunlap J.C."/>
            <person name="Radford A."/>
            <person name="Aramayo R."/>
            <person name="Natvig D.O."/>
            <person name="Alex L.A."/>
            <person name="Mannhaupt G."/>
            <person name="Ebbole D.J."/>
            <person name="Freitag M."/>
            <person name="Paulsen I."/>
            <person name="Sachs M.S."/>
            <person name="Lander E.S."/>
            <person name="Nusbaum C."/>
            <person name="Birren B.W."/>
        </authorList>
    </citation>
    <scope>NUCLEOTIDE SEQUENCE [LARGE SCALE GENOMIC DNA]</scope>
    <source>
        <strain>ATCC 24698 / 74-OR23-1A / CBS 708.71 / DSM 1257 / FGSC 987</strain>
    </source>
</reference>
<protein>
    <recommendedName>
        <fullName>Phosphorus acquisition-controlling protein</fullName>
    </recommendedName>
</protein>
<feature type="chain" id="PRO_0000127410" description="Phosphorus acquisition-controlling protein">
    <location>
        <begin position="1"/>
        <end position="801"/>
    </location>
</feature>
<feature type="domain" description="bHLH" evidence="2">
    <location>
        <begin position="645"/>
        <end position="735"/>
    </location>
</feature>
<feature type="region of interest" description="Disordered" evidence="3">
    <location>
        <begin position="292"/>
        <end position="317"/>
    </location>
</feature>
<feature type="region of interest" description="Disordered" evidence="3">
    <location>
        <begin position="366"/>
        <end position="607"/>
    </location>
</feature>
<feature type="region of interest" description="Interaction with negative regulatory factor" evidence="1">
    <location>
        <begin position="446"/>
        <end position="540"/>
    </location>
</feature>
<feature type="region of interest" description="Disordered" evidence="3">
    <location>
        <begin position="628"/>
        <end position="725"/>
    </location>
</feature>
<feature type="region of interest" description="Disordered" evidence="3">
    <location>
        <begin position="756"/>
        <end position="801"/>
    </location>
</feature>
<feature type="compositionally biased region" description="Low complexity" evidence="3">
    <location>
        <begin position="374"/>
        <end position="386"/>
    </location>
</feature>
<feature type="compositionally biased region" description="Polar residues" evidence="3">
    <location>
        <begin position="387"/>
        <end position="401"/>
    </location>
</feature>
<feature type="compositionally biased region" description="Polar residues" evidence="3">
    <location>
        <begin position="459"/>
        <end position="472"/>
    </location>
</feature>
<feature type="compositionally biased region" description="Basic and acidic residues" evidence="3">
    <location>
        <begin position="477"/>
        <end position="486"/>
    </location>
</feature>
<feature type="compositionally biased region" description="Low complexity" evidence="3">
    <location>
        <begin position="535"/>
        <end position="554"/>
    </location>
</feature>
<feature type="compositionally biased region" description="Polar residues" evidence="3">
    <location>
        <begin position="637"/>
        <end position="646"/>
    </location>
</feature>
<feature type="compositionally biased region" description="Basic and acidic residues" evidence="3">
    <location>
        <begin position="676"/>
        <end position="687"/>
    </location>
</feature>
<feature type="compositionally biased region" description="Gly residues" evidence="3">
    <location>
        <begin position="690"/>
        <end position="699"/>
    </location>
</feature>
<feature type="compositionally biased region" description="Basic and acidic residues" evidence="3">
    <location>
        <begin position="700"/>
        <end position="713"/>
    </location>
</feature>
<feature type="compositionally biased region" description="Low complexity" evidence="3">
    <location>
        <begin position="765"/>
        <end position="777"/>
    </location>
</feature>
<feature type="sequence conflict" description="In Ref. 1; AAA33603." evidence="4" ref="1">
    <original>I</original>
    <variation>V</variation>
    <location>
        <position position="142"/>
    </location>
</feature>
<organism>
    <name type="scientific">Neurospora crassa (strain ATCC 24698 / 74-OR23-1A / CBS 708.71 / DSM 1257 / FGSC 987)</name>
    <dbReference type="NCBI Taxonomy" id="367110"/>
    <lineage>
        <taxon>Eukaryota</taxon>
        <taxon>Fungi</taxon>
        <taxon>Dikarya</taxon>
        <taxon>Ascomycota</taxon>
        <taxon>Pezizomycotina</taxon>
        <taxon>Sordariomycetes</taxon>
        <taxon>Sordariomycetidae</taxon>
        <taxon>Sordariales</taxon>
        <taxon>Sordariaceae</taxon>
        <taxon>Neurospora</taxon>
    </lineage>
</organism>
<dbReference type="EMBL" id="M37700">
    <property type="protein sequence ID" value="AAA33603.1"/>
    <property type="status" value="ALT_SEQ"/>
    <property type="molecule type" value="Genomic_DNA"/>
</dbReference>
<dbReference type="EMBL" id="CM002236">
    <property type="protein sequence ID" value="EAA34721.2"/>
    <property type="molecule type" value="Genomic_DNA"/>
</dbReference>
<dbReference type="PIR" id="A36378">
    <property type="entry name" value="A36378"/>
</dbReference>
<dbReference type="RefSeq" id="XP_963957.2">
    <property type="nucleotide sequence ID" value="XM_958864.2"/>
</dbReference>
<dbReference type="SMR" id="P20824"/>
<dbReference type="STRING" id="367110.P20824"/>
<dbReference type="PaxDb" id="5141-EFNCRP00000009132"/>
<dbReference type="EnsemblFungi" id="EAA34721">
    <property type="protein sequence ID" value="EAA34721"/>
    <property type="gene ID" value="NCU09315"/>
</dbReference>
<dbReference type="GeneID" id="3880106"/>
<dbReference type="KEGG" id="ncr:NCU09315"/>
<dbReference type="VEuPathDB" id="FungiDB:NCU09315"/>
<dbReference type="HOGENOM" id="CLU_015973_1_0_1"/>
<dbReference type="InParanoid" id="P20824"/>
<dbReference type="OrthoDB" id="5344169at2759"/>
<dbReference type="Proteomes" id="UP000001805">
    <property type="component" value="Chromosome 1, Linkage Group I"/>
</dbReference>
<dbReference type="GO" id="GO:0090575">
    <property type="term" value="C:RNA polymerase II transcription regulator complex"/>
    <property type="evidence" value="ECO:0000318"/>
    <property type="project" value="GO_Central"/>
</dbReference>
<dbReference type="GO" id="GO:0000981">
    <property type="term" value="F:DNA-binding transcription factor activity, RNA polymerase II-specific"/>
    <property type="evidence" value="ECO:0000318"/>
    <property type="project" value="GO_Central"/>
</dbReference>
<dbReference type="GO" id="GO:0046983">
    <property type="term" value="F:protein dimerization activity"/>
    <property type="evidence" value="ECO:0007669"/>
    <property type="project" value="InterPro"/>
</dbReference>
<dbReference type="GO" id="GO:0000977">
    <property type="term" value="F:RNA polymerase II transcription regulatory region sequence-specific DNA binding"/>
    <property type="evidence" value="ECO:0000318"/>
    <property type="project" value="GO_Central"/>
</dbReference>
<dbReference type="GO" id="GO:0006357">
    <property type="term" value="P:regulation of transcription by RNA polymerase II"/>
    <property type="evidence" value="ECO:0000318"/>
    <property type="project" value="GO_Central"/>
</dbReference>
<dbReference type="CDD" id="cd11392">
    <property type="entry name" value="bHLH_ScPHO4_like"/>
    <property type="match status" value="1"/>
</dbReference>
<dbReference type="Gene3D" id="4.10.280.10">
    <property type="entry name" value="Helix-loop-helix DNA-binding domain"/>
    <property type="match status" value="1"/>
</dbReference>
<dbReference type="InterPro" id="IPR011598">
    <property type="entry name" value="bHLH_dom"/>
</dbReference>
<dbReference type="InterPro" id="IPR036638">
    <property type="entry name" value="HLH_DNA-bd_sf"/>
</dbReference>
<dbReference type="InterPro" id="IPR015660">
    <property type="entry name" value="MASH1/Ascl1a-like"/>
</dbReference>
<dbReference type="PANTHER" id="PTHR13935:SF106">
    <property type="entry name" value="ACHAETE-SCUTE COMPLEX PROTEIN T5-RELATED"/>
    <property type="match status" value="1"/>
</dbReference>
<dbReference type="PANTHER" id="PTHR13935">
    <property type="entry name" value="ACHAETE-SCUTE TRANSCRIPTION FACTOR-RELATED"/>
    <property type="match status" value="1"/>
</dbReference>
<dbReference type="Pfam" id="PF00010">
    <property type="entry name" value="HLH"/>
    <property type="match status" value="1"/>
</dbReference>
<dbReference type="SMART" id="SM00353">
    <property type="entry name" value="HLH"/>
    <property type="match status" value="1"/>
</dbReference>
<dbReference type="SUPFAM" id="SSF47459">
    <property type="entry name" value="HLH, helix-loop-helix DNA-binding domain"/>
    <property type="match status" value="1"/>
</dbReference>
<dbReference type="PROSITE" id="PS50888">
    <property type="entry name" value="BHLH"/>
    <property type="match status" value="1"/>
</dbReference>
<sequence>MNSSSWSAPDHSHHPALHTAADDDFHQYLDINDMGDLSDALDFDFRDFGADHHTAPHAGRHAADHLLHPSGGEHLDTPMTGTDMSMILSPVDHAMLRHGVQQQQHHQQQQHQQHQMPTITTTAPYQNAPTALIQPSTPSEAIVNTIDAQIQFLQQQKLHAQHQQLQEQQAAFFASQQNHIVPPTPQSLELTAGSSQNYYAQSTLSDQHHSGPQKQQQPQQAIDYRYTRIKDQHDMSFTPLVSPAVTPLETHFPIDTPFAVPGAYFSPLTSPALHAQNDALGIIDQRLGMMSGSSPREMELEPPAMSQASVSPGDLARKTRKNAVKARAKSGSGIKQSPISKPIRRKTATTPMLNPQALNQLVENAAPSQERQQPLTPLIPTSSSSTAGVTDSENGSISPENLNDVVLPVEMPPPPLPKPRSAKPSPFLAPQASGSAVPINLQPGRPGIASPATPASLMKLSSPSNRNPSVVGTGSHDPMDPDHIENFELPDSINFSSAPKPAPIITTLGTPALDPLQKAAAPLQTPGLPPPPSPAVAKPLALPSAALSSPQLKPDSAHSLKRTPQLAPMGRSSKKRASVTSIQMSPALRPKISPSIKPLLPGGSAGAEDAASILLATKSNYQRILEGNTVPGVSYPSELSTNLTSKRTSHKIAEQGRRNRINSALQEIATLLPKAPAKEGGDGDGDGHSSSGGGGGSGGADREDKREKDKDKAGGGIPNSKASTVEMAIEYIKQLQKEVADANKRAEEAERKLVEMKMQGGAATGSGSSVGDAGDLGTPTTEANPVVDEDLKSGGGDAMDE</sequence>
<evidence type="ECO:0000255" key="1"/>
<evidence type="ECO:0000255" key="2">
    <source>
        <dbReference type="PROSITE-ProRule" id="PRU00981"/>
    </source>
</evidence>
<evidence type="ECO:0000256" key="3">
    <source>
        <dbReference type="SAM" id="MobiDB-lite"/>
    </source>
</evidence>
<evidence type="ECO:0000305" key="4"/>
<gene>
    <name type="primary">nuc-1</name>
    <name type="ORF">NCU09315</name>
</gene>
<accession>P20824</accession>
<accession>Q7SD79</accession>
<proteinExistence type="inferred from homology"/>
<comment type="function">
    <text>Factor that activates the transcription of structural genes for phosphorus acquisition.</text>
</comment>
<comment type="subunit">
    <text>Binds DNA as a dimer.</text>
</comment>
<comment type="subcellular location">
    <subcellularLocation>
        <location evidence="2">Nucleus</location>
    </subcellularLocation>
</comment>
<comment type="sequence caution" evidence="4">
    <conflict type="erroneous gene model prediction">
        <sequence resource="EMBL-CDS" id="AAA33603"/>
    </conflict>
</comment>
<keyword id="KW-0010">Activator</keyword>
<keyword id="KW-0238">DNA-binding</keyword>
<keyword id="KW-0539">Nucleus</keyword>
<keyword id="KW-1185">Reference proteome</keyword>
<keyword id="KW-0804">Transcription</keyword>
<keyword id="KW-0805">Transcription regulation</keyword>
<name>NUC1_NEUCR</name>